<keyword id="KW-0030">Aminoacyl-tRNA synthetase</keyword>
<keyword id="KW-0067">ATP-binding</keyword>
<keyword id="KW-0963">Cytoplasm</keyword>
<keyword id="KW-0436">Ligase</keyword>
<keyword id="KW-0479">Metal-binding</keyword>
<keyword id="KW-0547">Nucleotide-binding</keyword>
<keyword id="KW-0648">Protein biosynthesis</keyword>
<keyword id="KW-1185">Reference proteome</keyword>
<keyword id="KW-0694">RNA-binding</keyword>
<keyword id="KW-0820">tRNA-binding</keyword>
<keyword id="KW-0862">Zinc</keyword>
<reference key="1">
    <citation type="journal article" date="2007" name="PLoS Genet.">
        <title>Patterns and implications of gene gain and loss in the evolution of Prochlorococcus.</title>
        <authorList>
            <person name="Kettler G.C."/>
            <person name="Martiny A.C."/>
            <person name="Huang K."/>
            <person name="Zucker J."/>
            <person name="Coleman M.L."/>
            <person name="Rodrigue S."/>
            <person name="Chen F."/>
            <person name="Lapidus A."/>
            <person name="Ferriera S."/>
            <person name="Johnson J."/>
            <person name="Steglich C."/>
            <person name="Church G.M."/>
            <person name="Richardson P."/>
            <person name="Chisholm S.W."/>
        </authorList>
    </citation>
    <scope>NUCLEOTIDE SEQUENCE [LARGE SCALE GENOMIC DNA]</scope>
    <source>
        <strain>MIT 9301</strain>
    </source>
</reference>
<protein>
    <recommendedName>
        <fullName evidence="1">Threonine--tRNA ligase</fullName>
        <ecNumber evidence="1">6.1.1.3</ecNumber>
    </recommendedName>
    <alternativeName>
        <fullName evidence="1">Threonyl-tRNA synthetase</fullName>
        <shortName evidence="1">ThrRS</shortName>
    </alternativeName>
</protein>
<gene>
    <name evidence="1" type="primary">thrS</name>
    <name type="ordered locus">P9301_06231</name>
</gene>
<comment type="function">
    <text evidence="1">Catalyzes the attachment of threonine to tRNA(Thr) in a two-step reaction: L-threonine is first activated by ATP to form Thr-AMP and then transferred to the acceptor end of tRNA(Thr). Also edits incorrectly charged L-seryl-tRNA(Thr).</text>
</comment>
<comment type="catalytic activity">
    <reaction evidence="1">
        <text>tRNA(Thr) + L-threonine + ATP = L-threonyl-tRNA(Thr) + AMP + diphosphate + H(+)</text>
        <dbReference type="Rhea" id="RHEA:24624"/>
        <dbReference type="Rhea" id="RHEA-COMP:9670"/>
        <dbReference type="Rhea" id="RHEA-COMP:9704"/>
        <dbReference type="ChEBI" id="CHEBI:15378"/>
        <dbReference type="ChEBI" id="CHEBI:30616"/>
        <dbReference type="ChEBI" id="CHEBI:33019"/>
        <dbReference type="ChEBI" id="CHEBI:57926"/>
        <dbReference type="ChEBI" id="CHEBI:78442"/>
        <dbReference type="ChEBI" id="CHEBI:78534"/>
        <dbReference type="ChEBI" id="CHEBI:456215"/>
        <dbReference type="EC" id="6.1.1.3"/>
    </reaction>
</comment>
<comment type="cofactor">
    <cofactor evidence="1">
        <name>Zn(2+)</name>
        <dbReference type="ChEBI" id="CHEBI:29105"/>
    </cofactor>
    <text evidence="1">Binds 1 zinc ion per subunit.</text>
</comment>
<comment type="subunit">
    <text evidence="1">Homodimer.</text>
</comment>
<comment type="subcellular location">
    <subcellularLocation>
        <location evidence="1">Cytoplasm</location>
    </subcellularLocation>
</comment>
<comment type="similarity">
    <text evidence="1">Belongs to the class-II aminoacyl-tRNA synthetase family.</text>
</comment>
<name>SYT_PROM0</name>
<feature type="chain" id="PRO_1000020462" description="Threonine--tRNA ligase">
    <location>
        <begin position="1"/>
        <end position="638"/>
    </location>
</feature>
<feature type="domain" description="TGS" evidence="2">
    <location>
        <begin position="1"/>
        <end position="61"/>
    </location>
</feature>
<feature type="region of interest" description="Catalytic" evidence="1">
    <location>
        <begin position="242"/>
        <end position="533"/>
    </location>
</feature>
<feature type="binding site" evidence="1">
    <location>
        <position position="333"/>
    </location>
    <ligand>
        <name>Zn(2+)</name>
        <dbReference type="ChEBI" id="CHEBI:29105"/>
    </ligand>
</feature>
<feature type="binding site" evidence="1">
    <location>
        <position position="384"/>
    </location>
    <ligand>
        <name>Zn(2+)</name>
        <dbReference type="ChEBI" id="CHEBI:29105"/>
    </ligand>
</feature>
<feature type="binding site" evidence="1">
    <location>
        <position position="510"/>
    </location>
    <ligand>
        <name>Zn(2+)</name>
        <dbReference type="ChEBI" id="CHEBI:29105"/>
    </ligand>
</feature>
<accession>A3PBX1</accession>
<evidence type="ECO:0000255" key="1">
    <source>
        <dbReference type="HAMAP-Rule" id="MF_00184"/>
    </source>
</evidence>
<evidence type="ECO:0000255" key="2">
    <source>
        <dbReference type="PROSITE-ProRule" id="PRU01228"/>
    </source>
</evidence>
<proteinExistence type="inferred from homology"/>
<sequence length="638" mass="74055">MPIITLPDGSKKVFEKSVTILEIAQSIGAGLAKATIAGRVNDVLLDATIPINKDSKVVIITSKDKEGIEIIRHSFAHLIGHAVKQIYSDIKMAIGPVIEDGFYYDIFSEYRFTPEDLIKIENRINKLIKTNYDVEILQVSKEEAIKTFKERDETFKLRIIEEIPEEGLINLYKHEEYIDMCRGPHVPNTRHLRHFKLLKLSGSYWRGNSENESLQRIYGTAWAKEKELKDYLTRIEEAEKRDHRKLGKKHSLFHIQEESPGMIFWHPNGWTIYQVLEKYIREILKKNDYLEIKTPQAVDKSLWEKSGHWEKFRDDMFTTASENRTYAIKPMNCPCHIQVFNQGLKSYKDLPIRLAEFGSCHRNEPSGALHGLMRVRNFTQDDAHIFCTEEQIQEEVSTFIDLVFEVYKTFGFDEIIIKLSTRPEKRVGSEDIWDKSEEALTKALDNKNLKWELQPGEGAFYGPKIEFSLKDCLSRVWQCGTIQVDFSMPIRLDATYVDIDNEKRNPVMLHRAILGSFERFIGILIEQYEAKFPIWLAPYQIILLSITDRNIEKCLKFNELINNNGYRSKVDIRNEKIGYKIREATLGRVPLIAVIGDKEEEIDSVALRALNGKNLGIFNLPNLFKLMDELIEKKGRTE</sequence>
<organism>
    <name type="scientific">Prochlorococcus marinus (strain MIT 9301)</name>
    <dbReference type="NCBI Taxonomy" id="167546"/>
    <lineage>
        <taxon>Bacteria</taxon>
        <taxon>Bacillati</taxon>
        <taxon>Cyanobacteriota</taxon>
        <taxon>Cyanophyceae</taxon>
        <taxon>Synechococcales</taxon>
        <taxon>Prochlorococcaceae</taxon>
        <taxon>Prochlorococcus</taxon>
    </lineage>
</organism>
<dbReference type="EC" id="6.1.1.3" evidence="1"/>
<dbReference type="EMBL" id="CP000576">
    <property type="protein sequence ID" value="ABO17246.1"/>
    <property type="molecule type" value="Genomic_DNA"/>
</dbReference>
<dbReference type="RefSeq" id="WP_011862613.1">
    <property type="nucleotide sequence ID" value="NC_009091.1"/>
</dbReference>
<dbReference type="SMR" id="A3PBX1"/>
<dbReference type="STRING" id="167546.P9301_06231"/>
<dbReference type="KEGG" id="pmg:P9301_06231"/>
<dbReference type="eggNOG" id="COG0441">
    <property type="taxonomic scope" value="Bacteria"/>
</dbReference>
<dbReference type="HOGENOM" id="CLU_008554_0_1_3"/>
<dbReference type="OrthoDB" id="9802304at2"/>
<dbReference type="Proteomes" id="UP000001430">
    <property type="component" value="Chromosome"/>
</dbReference>
<dbReference type="GO" id="GO:0005829">
    <property type="term" value="C:cytosol"/>
    <property type="evidence" value="ECO:0007669"/>
    <property type="project" value="TreeGrafter"/>
</dbReference>
<dbReference type="GO" id="GO:0005524">
    <property type="term" value="F:ATP binding"/>
    <property type="evidence" value="ECO:0007669"/>
    <property type="project" value="UniProtKB-UniRule"/>
</dbReference>
<dbReference type="GO" id="GO:0046872">
    <property type="term" value="F:metal ion binding"/>
    <property type="evidence" value="ECO:0007669"/>
    <property type="project" value="UniProtKB-KW"/>
</dbReference>
<dbReference type="GO" id="GO:0004829">
    <property type="term" value="F:threonine-tRNA ligase activity"/>
    <property type="evidence" value="ECO:0007669"/>
    <property type="project" value="UniProtKB-UniRule"/>
</dbReference>
<dbReference type="GO" id="GO:0000049">
    <property type="term" value="F:tRNA binding"/>
    <property type="evidence" value="ECO:0007669"/>
    <property type="project" value="UniProtKB-KW"/>
</dbReference>
<dbReference type="GO" id="GO:0006435">
    <property type="term" value="P:threonyl-tRNA aminoacylation"/>
    <property type="evidence" value="ECO:0007669"/>
    <property type="project" value="UniProtKB-UniRule"/>
</dbReference>
<dbReference type="CDD" id="cd01667">
    <property type="entry name" value="TGS_ThrRS"/>
    <property type="match status" value="1"/>
</dbReference>
<dbReference type="CDD" id="cd00771">
    <property type="entry name" value="ThrRS_core"/>
    <property type="match status" value="1"/>
</dbReference>
<dbReference type="FunFam" id="3.10.20.30:FF:000005">
    <property type="entry name" value="Threonine--tRNA ligase"/>
    <property type="match status" value="1"/>
</dbReference>
<dbReference type="FunFam" id="3.30.54.20:FF:000002">
    <property type="entry name" value="Threonine--tRNA ligase"/>
    <property type="match status" value="1"/>
</dbReference>
<dbReference type="FunFam" id="3.30.930.10:FF:000002">
    <property type="entry name" value="Threonine--tRNA ligase"/>
    <property type="match status" value="1"/>
</dbReference>
<dbReference type="FunFam" id="3.30.980.10:FF:000005">
    <property type="entry name" value="Threonyl-tRNA synthetase, mitochondrial"/>
    <property type="match status" value="1"/>
</dbReference>
<dbReference type="Gene3D" id="3.10.20.30">
    <property type="match status" value="1"/>
</dbReference>
<dbReference type="Gene3D" id="3.30.54.20">
    <property type="match status" value="1"/>
</dbReference>
<dbReference type="Gene3D" id="3.40.50.800">
    <property type="entry name" value="Anticodon-binding domain"/>
    <property type="match status" value="1"/>
</dbReference>
<dbReference type="Gene3D" id="3.30.930.10">
    <property type="entry name" value="Bira Bifunctional Protein, Domain 2"/>
    <property type="match status" value="1"/>
</dbReference>
<dbReference type="Gene3D" id="3.30.980.10">
    <property type="entry name" value="Threonyl-trna Synthetase, Chain A, domain 2"/>
    <property type="match status" value="1"/>
</dbReference>
<dbReference type="HAMAP" id="MF_00184">
    <property type="entry name" value="Thr_tRNA_synth"/>
    <property type="match status" value="1"/>
</dbReference>
<dbReference type="InterPro" id="IPR002314">
    <property type="entry name" value="aa-tRNA-synt_IIb"/>
</dbReference>
<dbReference type="InterPro" id="IPR006195">
    <property type="entry name" value="aa-tRNA-synth_II"/>
</dbReference>
<dbReference type="InterPro" id="IPR045864">
    <property type="entry name" value="aa-tRNA-synth_II/BPL/LPL"/>
</dbReference>
<dbReference type="InterPro" id="IPR004154">
    <property type="entry name" value="Anticodon-bd"/>
</dbReference>
<dbReference type="InterPro" id="IPR036621">
    <property type="entry name" value="Anticodon-bd_dom_sf"/>
</dbReference>
<dbReference type="InterPro" id="IPR012675">
    <property type="entry name" value="Beta-grasp_dom_sf"/>
</dbReference>
<dbReference type="InterPro" id="IPR004095">
    <property type="entry name" value="TGS"/>
</dbReference>
<dbReference type="InterPro" id="IPR012676">
    <property type="entry name" value="TGS-like"/>
</dbReference>
<dbReference type="InterPro" id="IPR002320">
    <property type="entry name" value="Thr-tRNA-ligase_IIa"/>
</dbReference>
<dbReference type="InterPro" id="IPR018163">
    <property type="entry name" value="Thr/Ala-tRNA-synth_IIc_edit"/>
</dbReference>
<dbReference type="InterPro" id="IPR033728">
    <property type="entry name" value="ThrRS_core"/>
</dbReference>
<dbReference type="InterPro" id="IPR012947">
    <property type="entry name" value="tRNA_SAD"/>
</dbReference>
<dbReference type="NCBIfam" id="TIGR00418">
    <property type="entry name" value="thrS"/>
    <property type="match status" value="1"/>
</dbReference>
<dbReference type="PANTHER" id="PTHR11451:SF44">
    <property type="entry name" value="THREONINE--TRNA LIGASE, CHLOROPLASTIC_MITOCHONDRIAL 2"/>
    <property type="match status" value="1"/>
</dbReference>
<dbReference type="PANTHER" id="PTHR11451">
    <property type="entry name" value="THREONINE-TRNA LIGASE"/>
    <property type="match status" value="1"/>
</dbReference>
<dbReference type="Pfam" id="PF03129">
    <property type="entry name" value="HGTP_anticodon"/>
    <property type="match status" value="1"/>
</dbReference>
<dbReference type="Pfam" id="PF02824">
    <property type="entry name" value="TGS"/>
    <property type="match status" value="1"/>
</dbReference>
<dbReference type="Pfam" id="PF00587">
    <property type="entry name" value="tRNA-synt_2b"/>
    <property type="match status" value="1"/>
</dbReference>
<dbReference type="Pfam" id="PF07973">
    <property type="entry name" value="tRNA_SAD"/>
    <property type="match status" value="1"/>
</dbReference>
<dbReference type="PRINTS" id="PR01047">
    <property type="entry name" value="TRNASYNTHTHR"/>
</dbReference>
<dbReference type="SMART" id="SM00863">
    <property type="entry name" value="tRNA_SAD"/>
    <property type="match status" value="1"/>
</dbReference>
<dbReference type="SUPFAM" id="SSF52954">
    <property type="entry name" value="Class II aaRS ABD-related"/>
    <property type="match status" value="1"/>
</dbReference>
<dbReference type="SUPFAM" id="SSF55681">
    <property type="entry name" value="Class II aaRS and biotin synthetases"/>
    <property type="match status" value="1"/>
</dbReference>
<dbReference type="SUPFAM" id="SSF81271">
    <property type="entry name" value="TGS-like"/>
    <property type="match status" value="1"/>
</dbReference>
<dbReference type="SUPFAM" id="SSF55186">
    <property type="entry name" value="ThrRS/AlaRS common domain"/>
    <property type="match status" value="1"/>
</dbReference>
<dbReference type="PROSITE" id="PS50862">
    <property type="entry name" value="AA_TRNA_LIGASE_II"/>
    <property type="match status" value="1"/>
</dbReference>
<dbReference type="PROSITE" id="PS51880">
    <property type="entry name" value="TGS"/>
    <property type="match status" value="1"/>
</dbReference>